<sequence length="423" mass="47235">MIRFCPSCFALKRTAPVLNHTSRLGNYFNNTFSKFSVNRMSVSSYSSDASSTVMDESPPNGVTKSVSGKGPTAVVMMNMGGPSNLDEVGPFLERLFTDGDIIPLGYFQNSLGKFIAKRRTPKVQNHYSDIGGGSPILHWTRIQGSEMCKILDKKCPESAPHLPFVAFRYAPPLTEDMLDELKKANVSRAVAFSQYPQWSCATSGASLNELRRKLIEKGMEKDFEWSIVDRWPLQQGLINAFAENIEETLKTYPEDVRDDVVIVFSAHSLPMSQVAKGDPYVYEIAATSQAVMKRLNYKNKFVNAWQSKVGPLPWMSPATDFVIEQLGNRGQKNMILVPIAFTSDHIETLKELEDYIEDAKQKGITGVKRVSSINGSMTAIQGMADLVAEHLKAKVPYSRQFTQRCPGCTSESCAERINFFQDF</sequence>
<feature type="transit peptide" description="Mitochondrion" evidence="2">
    <location>
        <begin position="1"/>
        <end position="40"/>
    </location>
</feature>
<feature type="chain" id="PRO_0000008878" description="Ferrochelatase, mitochondrial">
    <location>
        <begin position="41"/>
        <end position="423"/>
    </location>
</feature>
<feature type="active site" evidence="1">
    <location>
        <position position="385"/>
    </location>
</feature>
<feature type="binding site" evidence="1">
    <location>
        <position position="200"/>
    </location>
    <ligand>
        <name>[2Fe-2S] cluster</name>
        <dbReference type="ChEBI" id="CHEBI:190135"/>
    </ligand>
</feature>
<feature type="binding site" evidence="1">
    <location>
        <position position="405"/>
    </location>
    <ligand>
        <name>[2Fe-2S] cluster</name>
        <dbReference type="ChEBI" id="CHEBI:190135"/>
    </ligand>
</feature>
<feature type="binding site" evidence="1">
    <location>
        <position position="408"/>
    </location>
    <ligand>
        <name>[2Fe-2S] cluster</name>
        <dbReference type="ChEBI" id="CHEBI:190135"/>
    </ligand>
</feature>
<feature type="binding site" evidence="1">
    <location>
        <position position="413"/>
    </location>
    <ligand>
        <name>[2Fe-2S] cluster</name>
        <dbReference type="ChEBI" id="CHEBI:190135"/>
    </ligand>
</feature>
<name>HEMH_SCHPO</name>
<dbReference type="EC" id="4.98.1.1"/>
<dbReference type="EMBL" id="CU329672">
    <property type="protein sequence ID" value="CAA18311.1"/>
    <property type="status" value="ALT_SEQ"/>
    <property type="molecule type" value="Genomic_DNA"/>
</dbReference>
<dbReference type="PIR" id="T41302">
    <property type="entry name" value="T41302"/>
</dbReference>
<dbReference type="SMR" id="O59786"/>
<dbReference type="BioGRID" id="275770">
    <property type="interactions" value="1"/>
</dbReference>
<dbReference type="FunCoup" id="O59786">
    <property type="interactions" value="575"/>
</dbReference>
<dbReference type="STRING" id="284812.O59786"/>
<dbReference type="PaxDb" id="4896-SPCC320.09.1"/>
<dbReference type="EnsemblFungi" id="SPCC320.09.1">
    <property type="protein sequence ID" value="SPCC320.09.1:pep"/>
    <property type="gene ID" value="SPCC320.09"/>
</dbReference>
<dbReference type="PomBase" id="SPCC320.09">
    <property type="gene designation" value="hem15"/>
</dbReference>
<dbReference type="VEuPathDB" id="FungiDB:SPCC320.09"/>
<dbReference type="eggNOG" id="KOG1321">
    <property type="taxonomic scope" value="Eukaryota"/>
</dbReference>
<dbReference type="HOGENOM" id="CLU_018884_1_0_1"/>
<dbReference type="InParanoid" id="O59786"/>
<dbReference type="Reactome" id="R-SPO-189451">
    <property type="pathway name" value="Heme biosynthesis"/>
</dbReference>
<dbReference type="Reactome" id="R-SPO-9837999">
    <property type="pathway name" value="Mitochondrial protein degradation"/>
</dbReference>
<dbReference type="UniPathway" id="UPA00252">
    <property type="reaction ID" value="UER00325"/>
</dbReference>
<dbReference type="PRO" id="PR:O59786"/>
<dbReference type="Proteomes" id="UP000002485">
    <property type="component" value="Chromosome III"/>
</dbReference>
<dbReference type="GO" id="GO:0005829">
    <property type="term" value="C:cytosol"/>
    <property type="evidence" value="ECO:0007005"/>
    <property type="project" value="PomBase"/>
</dbReference>
<dbReference type="GO" id="GO:0005743">
    <property type="term" value="C:mitochondrial inner membrane"/>
    <property type="evidence" value="ECO:0000266"/>
    <property type="project" value="PomBase"/>
</dbReference>
<dbReference type="GO" id="GO:0005739">
    <property type="term" value="C:mitochondrion"/>
    <property type="evidence" value="ECO:0000318"/>
    <property type="project" value="GO_Central"/>
</dbReference>
<dbReference type="GO" id="GO:0005634">
    <property type="term" value="C:nucleus"/>
    <property type="evidence" value="ECO:0007005"/>
    <property type="project" value="PomBase"/>
</dbReference>
<dbReference type="GO" id="GO:0051537">
    <property type="term" value="F:2 iron, 2 sulfur cluster binding"/>
    <property type="evidence" value="ECO:0000314"/>
    <property type="project" value="PomBase"/>
</dbReference>
<dbReference type="GO" id="GO:0004325">
    <property type="term" value="F:ferrochelatase activity"/>
    <property type="evidence" value="ECO:0000318"/>
    <property type="project" value="GO_Central"/>
</dbReference>
<dbReference type="GO" id="GO:0046872">
    <property type="term" value="F:metal ion binding"/>
    <property type="evidence" value="ECO:0007669"/>
    <property type="project" value="UniProtKB-KW"/>
</dbReference>
<dbReference type="GO" id="GO:0006783">
    <property type="term" value="P:heme biosynthetic process"/>
    <property type="evidence" value="ECO:0000318"/>
    <property type="project" value="GO_Central"/>
</dbReference>
<dbReference type="CDD" id="cd00419">
    <property type="entry name" value="Ferrochelatase_C"/>
    <property type="match status" value="1"/>
</dbReference>
<dbReference type="CDD" id="cd03411">
    <property type="entry name" value="Ferrochelatase_N"/>
    <property type="match status" value="1"/>
</dbReference>
<dbReference type="FunFam" id="3.40.50.1400:FF:000001">
    <property type="entry name" value="Ferrochelatase"/>
    <property type="match status" value="1"/>
</dbReference>
<dbReference type="Gene3D" id="3.40.50.1400">
    <property type="match status" value="2"/>
</dbReference>
<dbReference type="HAMAP" id="MF_00323">
    <property type="entry name" value="Ferrochelatase"/>
    <property type="match status" value="1"/>
</dbReference>
<dbReference type="InterPro" id="IPR001015">
    <property type="entry name" value="Ferrochelatase"/>
</dbReference>
<dbReference type="InterPro" id="IPR019772">
    <property type="entry name" value="Ferrochelatase_AS"/>
</dbReference>
<dbReference type="InterPro" id="IPR033644">
    <property type="entry name" value="Ferrochelatase_C"/>
</dbReference>
<dbReference type="InterPro" id="IPR033659">
    <property type="entry name" value="Ferrochelatase_N"/>
</dbReference>
<dbReference type="NCBIfam" id="TIGR00109">
    <property type="entry name" value="hemH"/>
    <property type="match status" value="1"/>
</dbReference>
<dbReference type="PANTHER" id="PTHR11108">
    <property type="entry name" value="FERROCHELATASE"/>
    <property type="match status" value="1"/>
</dbReference>
<dbReference type="PANTHER" id="PTHR11108:SF1">
    <property type="entry name" value="FERROCHELATASE, MITOCHONDRIAL"/>
    <property type="match status" value="1"/>
</dbReference>
<dbReference type="Pfam" id="PF00762">
    <property type="entry name" value="Ferrochelatase"/>
    <property type="match status" value="1"/>
</dbReference>
<dbReference type="SUPFAM" id="SSF53800">
    <property type="entry name" value="Chelatase"/>
    <property type="match status" value="1"/>
</dbReference>
<dbReference type="PROSITE" id="PS00534">
    <property type="entry name" value="FERROCHELATASE"/>
    <property type="match status" value="1"/>
</dbReference>
<keyword id="KW-0001">2Fe-2S</keyword>
<keyword id="KW-0963">Cytoplasm</keyword>
<keyword id="KW-0350">Heme biosynthesis</keyword>
<keyword id="KW-0408">Iron</keyword>
<keyword id="KW-0411">Iron-sulfur</keyword>
<keyword id="KW-0456">Lyase</keyword>
<keyword id="KW-0472">Membrane</keyword>
<keyword id="KW-0479">Metal-binding</keyword>
<keyword id="KW-0496">Mitochondrion</keyword>
<keyword id="KW-0999">Mitochondrion inner membrane</keyword>
<keyword id="KW-0539">Nucleus</keyword>
<keyword id="KW-0627">Porphyrin biosynthesis</keyword>
<keyword id="KW-1185">Reference proteome</keyword>
<keyword id="KW-0809">Transit peptide</keyword>
<comment type="function">
    <text evidence="1">Catalyzes the ferrous insertion into protoporphyrin IX.</text>
</comment>
<comment type="catalytic activity">
    <reaction>
        <text>heme b + 2 H(+) = protoporphyrin IX + Fe(2+)</text>
        <dbReference type="Rhea" id="RHEA:22584"/>
        <dbReference type="ChEBI" id="CHEBI:15378"/>
        <dbReference type="ChEBI" id="CHEBI:29033"/>
        <dbReference type="ChEBI" id="CHEBI:57306"/>
        <dbReference type="ChEBI" id="CHEBI:60344"/>
        <dbReference type="EC" id="4.98.1.1"/>
    </reaction>
</comment>
<comment type="cofactor">
    <cofactor evidence="1">
        <name>[2Fe-2S] cluster</name>
        <dbReference type="ChEBI" id="CHEBI:190135"/>
    </cofactor>
    <text evidence="1">Binds 1 [2Fe-2S] cluster.</text>
</comment>
<comment type="pathway">
    <text>Porphyrin-containing compound metabolism; protoheme biosynthesis; protoheme from protoporphyrin-IX: step 1/1.</text>
</comment>
<comment type="subunit">
    <text evidence="1">Monomer.</text>
</comment>
<comment type="subcellular location">
    <subcellularLocation>
        <location evidence="1">Mitochondrion inner membrane</location>
    </subcellularLocation>
    <subcellularLocation>
        <location evidence="3">Cytoplasm</location>
    </subcellularLocation>
    <subcellularLocation>
        <location evidence="3">Nucleus</location>
    </subcellularLocation>
    <text evidence="1">Bound to the mitochondrial inner membrane in eukaryotic cells with its active site on the matrix side of the membrane.</text>
</comment>
<comment type="similarity">
    <text evidence="4">Belongs to the ferrochelatase family.</text>
</comment>
<comment type="sequence caution" evidence="4">
    <conflict type="erroneous gene model prediction">
        <sequence resource="EMBL-CDS" id="CAA18311"/>
    </conflict>
</comment>
<organism>
    <name type="scientific">Schizosaccharomyces pombe (strain 972 / ATCC 24843)</name>
    <name type="common">Fission yeast</name>
    <dbReference type="NCBI Taxonomy" id="284812"/>
    <lineage>
        <taxon>Eukaryota</taxon>
        <taxon>Fungi</taxon>
        <taxon>Dikarya</taxon>
        <taxon>Ascomycota</taxon>
        <taxon>Taphrinomycotina</taxon>
        <taxon>Schizosaccharomycetes</taxon>
        <taxon>Schizosaccharomycetales</taxon>
        <taxon>Schizosaccharomycetaceae</taxon>
        <taxon>Schizosaccharomyces</taxon>
    </lineage>
</organism>
<gene>
    <name type="primary">hem15</name>
    <name type="ORF">SPCC320.09</name>
</gene>
<protein>
    <recommendedName>
        <fullName>Ferrochelatase, mitochondrial</fullName>
        <ecNumber>4.98.1.1</ecNumber>
    </recommendedName>
    <alternativeName>
        <fullName>Heme synthase</fullName>
    </alternativeName>
    <alternativeName>
        <fullName>Protoheme ferro-lyase</fullName>
    </alternativeName>
</protein>
<reference key="1">
    <citation type="journal article" date="2002" name="Nature">
        <title>The genome sequence of Schizosaccharomyces pombe.</title>
        <authorList>
            <person name="Wood V."/>
            <person name="Gwilliam R."/>
            <person name="Rajandream M.A."/>
            <person name="Lyne M.H."/>
            <person name="Lyne R."/>
            <person name="Stewart A."/>
            <person name="Sgouros J.G."/>
            <person name="Peat N."/>
            <person name="Hayles J."/>
            <person name="Baker S.G."/>
            <person name="Basham D."/>
            <person name="Bowman S."/>
            <person name="Brooks K."/>
            <person name="Brown D."/>
            <person name="Brown S."/>
            <person name="Chillingworth T."/>
            <person name="Churcher C.M."/>
            <person name="Collins M."/>
            <person name="Connor R."/>
            <person name="Cronin A."/>
            <person name="Davis P."/>
            <person name="Feltwell T."/>
            <person name="Fraser A."/>
            <person name="Gentles S."/>
            <person name="Goble A."/>
            <person name="Hamlin N."/>
            <person name="Harris D.E."/>
            <person name="Hidalgo J."/>
            <person name="Hodgson G."/>
            <person name="Holroyd S."/>
            <person name="Hornsby T."/>
            <person name="Howarth S."/>
            <person name="Huckle E.J."/>
            <person name="Hunt S."/>
            <person name="Jagels K."/>
            <person name="James K.D."/>
            <person name="Jones L."/>
            <person name="Jones M."/>
            <person name="Leather S."/>
            <person name="McDonald S."/>
            <person name="McLean J."/>
            <person name="Mooney P."/>
            <person name="Moule S."/>
            <person name="Mungall K.L."/>
            <person name="Murphy L.D."/>
            <person name="Niblett D."/>
            <person name="Odell C."/>
            <person name="Oliver K."/>
            <person name="O'Neil S."/>
            <person name="Pearson D."/>
            <person name="Quail M.A."/>
            <person name="Rabbinowitsch E."/>
            <person name="Rutherford K.M."/>
            <person name="Rutter S."/>
            <person name="Saunders D."/>
            <person name="Seeger K."/>
            <person name="Sharp S."/>
            <person name="Skelton J."/>
            <person name="Simmonds M.N."/>
            <person name="Squares R."/>
            <person name="Squares S."/>
            <person name="Stevens K."/>
            <person name="Taylor K."/>
            <person name="Taylor R.G."/>
            <person name="Tivey A."/>
            <person name="Walsh S.V."/>
            <person name="Warren T."/>
            <person name="Whitehead S."/>
            <person name="Woodward J.R."/>
            <person name="Volckaert G."/>
            <person name="Aert R."/>
            <person name="Robben J."/>
            <person name="Grymonprez B."/>
            <person name="Weltjens I."/>
            <person name="Vanstreels E."/>
            <person name="Rieger M."/>
            <person name="Schaefer M."/>
            <person name="Mueller-Auer S."/>
            <person name="Gabel C."/>
            <person name="Fuchs M."/>
            <person name="Duesterhoeft A."/>
            <person name="Fritzc C."/>
            <person name="Holzer E."/>
            <person name="Moestl D."/>
            <person name="Hilbert H."/>
            <person name="Borzym K."/>
            <person name="Langer I."/>
            <person name="Beck A."/>
            <person name="Lehrach H."/>
            <person name="Reinhardt R."/>
            <person name="Pohl T.M."/>
            <person name="Eger P."/>
            <person name="Zimmermann W."/>
            <person name="Wedler H."/>
            <person name="Wambutt R."/>
            <person name="Purnelle B."/>
            <person name="Goffeau A."/>
            <person name="Cadieu E."/>
            <person name="Dreano S."/>
            <person name="Gloux S."/>
            <person name="Lelaure V."/>
            <person name="Mottier S."/>
            <person name="Galibert F."/>
            <person name="Aves S.J."/>
            <person name="Xiang Z."/>
            <person name="Hunt C."/>
            <person name="Moore K."/>
            <person name="Hurst S.M."/>
            <person name="Lucas M."/>
            <person name="Rochet M."/>
            <person name="Gaillardin C."/>
            <person name="Tallada V.A."/>
            <person name="Garzon A."/>
            <person name="Thode G."/>
            <person name="Daga R.R."/>
            <person name="Cruzado L."/>
            <person name="Jimenez J."/>
            <person name="Sanchez M."/>
            <person name="del Rey F."/>
            <person name="Benito J."/>
            <person name="Dominguez A."/>
            <person name="Revuelta J.L."/>
            <person name="Moreno S."/>
            <person name="Armstrong J."/>
            <person name="Forsburg S.L."/>
            <person name="Cerutti L."/>
            <person name="Lowe T."/>
            <person name="McCombie W.R."/>
            <person name="Paulsen I."/>
            <person name="Potashkin J."/>
            <person name="Shpakovski G.V."/>
            <person name="Ussery D."/>
            <person name="Barrell B.G."/>
            <person name="Nurse P."/>
        </authorList>
    </citation>
    <scope>NUCLEOTIDE SEQUENCE [LARGE SCALE GENOMIC DNA]</scope>
    <source>
        <strain>972 / ATCC 24843</strain>
    </source>
</reference>
<reference key="2">
    <citation type="journal article" date="2006" name="Nat. Biotechnol.">
        <title>ORFeome cloning and global analysis of protein localization in the fission yeast Schizosaccharomyces pombe.</title>
        <authorList>
            <person name="Matsuyama A."/>
            <person name="Arai R."/>
            <person name="Yashiroda Y."/>
            <person name="Shirai A."/>
            <person name="Kamata A."/>
            <person name="Sekido S."/>
            <person name="Kobayashi Y."/>
            <person name="Hashimoto A."/>
            <person name="Hamamoto M."/>
            <person name="Hiraoka Y."/>
            <person name="Horinouchi S."/>
            <person name="Yoshida M."/>
        </authorList>
    </citation>
    <scope>SUBCELLULAR LOCATION [LARGE SCALE ANALYSIS]</scope>
</reference>
<reference key="3">
    <citation type="journal article" date="2014" name="Nat. Struct. Mol. Biol.">
        <title>The translational landscape of fission-yeast meiosis and sporulation.</title>
        <authorList>
            <person name="Duncan C.D."/>
            <person name="Mata J."/>
        </authorList>
    </citation>
    <scope>GENE MODEL REVISION</scope>
</reference>
<evidence type="ECO:0000250" key="1"/>
<evidence type="ECO:0000255" key="2"/>
<evidence type="ECO:0000269" key="3">
    <source>
    </source>
</evidence>
<evidence type="ECO:0000305" key="4"/>
<proteinExistence type="inferred from homology"/>
<accession>O59786</accession>